<protein>
    <recommendedName>
        <fullName evidence="1">Sec-independent protein translocase protein TatA</fullName>
    </recommendedName>
</protein>
<sequence>MSLGPWQLFLVLIIILVLFGAGRLPQVMGDLGKGIKNLKQELKDSEKLSSNEPDR</sequence>
<dbReference type="EMBL" id="AE017321">
    <property type="protein sequence ID" value="AAW71266.1"/>
    <property type="molecule type" value="Genomic_DNA"/>
</dbReference>
<dbReference type="RefSeq" id="WP_006013840.1">
    <property type="nucleotide sequence ID" value="NC_006833.1"/>
</dbReference>
<dbReference type="SMR" id="Q5GRV8"/>
<dbReference type="STRING" id="292805.Wbm0678"/>
<dbReference type="KEGG" id="wbm:Wbm0678"/>
<dbReference type="eggNOG" id="COG1826">
    <property type="taxonomic scope" value="Bacteria"/>
</dbReference>
<dbReference type="HOGENOM" id="CLU_086034_6_2_5"/>
<dbReference type="Proteomes" id="UP000000534">
    <property type="component" value="Chromosome"/>
</dbReference>
<dbReference type="GO" id="GO:0033281">
    <property type="term" value="C:TAT protein transport complex"/>
    <property type="evidence" value="ECO:0007669"/>
    <property type="project" value="UniProtKB-UniRule"/>
</dbReference>
<dbReference type="GO" id="GO:0008320">
    <property type="term" value="F:protein transmembrane transporter activity"/>
    <property type="evidence" value="ECO:0007669"/>
    <property type="project" value="UniProtKB-UniRule"/>
</dbReference>
<dbReference type="GO" id="GO:0043953">
    <property type="term" value="P:protein transport by the Tat complex"/>
    <property type="evidence" value="ECO:0007669"/>
    <property type="project" value="UniProtKB-UniRule"/>
</dbReference>
<dbReference type="Gene3D" id="1.20.5.3310">
    <property type="match status" value="1"/>
</dbReference>
<dbReference type="HAMAP" id="MF_00236">
    <property type="entry name" value="TatA_E"/>
    <property type="match status" value="1"/>
</dbReference>
<dbReference type="InterPro" id="IPR003369">
    <property type="entry name" value="TatA/B/E"/>
</dbReference>
<dbReference type="InterPro" id="IPR006312">
    <property type="entry name" value="TatA/E"/>
</dbReference>
<dbReference type="NCBIfam" id="TIGR01411">
    <property type="entry name" value="tatAE"/>
    <property type="match status" value="1"/>
</dbReference>
<dbReference type="PANTHER" id="PTHR42982">
    <property type="entry name" value="SEC-INDEPENDENT PROTEIN TRANSLOCASE PROTEIN TATA"/>
    <property type="match status" value="1"/>
</dbReference>
<dbReference type="PANTHER" id="PTHR42982:SF1">
    <property type="entry name" value="SEC-INDEPENDENT PROTEIN TRANSLOCASE PROTEIN TATA"/>
    <property type="match status" value="1"/>
</dbReference>
<dbReference type="Pfam" id="PF02416">
    <property type="entry name" value="TatA_B_E"/>
    <property type="match status" value="1"/>
</dbReference>
<evidence type="ECO:0000255" key="1">
    <source>
        <dbReference type="HAMAP-Rule" id="MF_00236"/>
    </source>
</evidence>
<name>TATA_WOLTR</name>
<keyword id="KW-1003">Cell membrane</keyword>
<keyword id="KW-0472">Membrane</keyword>
<keyword id="KW-0653">Protein transport</keyword>
<keyword id="KW-1185">Reference proteome</keyword>
<keyword id="KW-0811">Translocation</keyword>
<keyword id="KW-0812">Transmembrane</keyword>
<keyword id="KW-1133">Transmembrane helix</keyword>
<keyword id="KW-0813">Transport</keyword>
<organism>
    <name type="scientific">Wolbachia sp. subsp. Brugia malayi (strain TRS)</name>
    <dbReference type="NCBI Taxonomy" id="292805"/>
    <lineage>
        <taxon>Bacteria</taxon>
        <taxon>Pseudomonadati</taxon>
        <taxon>Pseudomonadota</taxon>
        <taxon>Alphaproteobacteria</taxon>
        <taxon>Rickettsiales</taxon>
        <taxon>Anaplasmataceae</taxon>
        <taxon>Wolbachieae</taxon>
        <taxon>Wolbachia</taxon>
    </lineage>
</organism>
<accession>Q5GRV8</accession>
<proteinExistence type="inferred from homology"/>
<feature type="chain" id="PRO_1000197916" description="Sec-independent protein translocase protein TatA">
    <location>
        <begin position="1"/>
        <end position="55"/>
    </location>
</feature>
<feature type="transmembrane region" description="Helical" evidence="1">
    <location>
        <begin position="1"/>
        <end position="21"/>
    </location>
</feature>
<gene>
    <name evidence="1" type="primary">tatA</name>
    <name type="ordered locus">Wbm0678</name>
</gene>
<reference key="1">
    <citation type="journal article" date="2005" name="PLoS Biol.">
        <title>The Wolbachia genome of Brugia malayi: endosymbiont evolution within a human pathogenic nematode.</title>
        <authorList>
            <person name="Foster J."/>
            <person name="Ganatra M."/>
            <person name="Kamal I."/>
            <person name="Ware J."/>
            <person name="Makarova K."/>
            <person name="Ivanova N."/>
            <person name="Bhattacharyya A."/>
            <person name="Kapatral V."/>
            <person name="Kumar S."/>
            <person name="Posfai J."/>
            <person name="Vincze T."/>
            <person name="Ingram J."/>
            <person name="Moran L."/>
            <person name="Lapidus A."/>
            <person name="Omelchenko M."/>
            <person name="Kyrpides N."/>
            <person name="Ghedin E."/>
            <person name="Wang S."/>
            <person name="Goltsman E."/>
            <person name="Joukov V."/>
            <person name="Ostrovskaya O."/>
            <person name="Tsukerman K."/>
            <person name="Mazur M."/>
            <person name="Comb D."/>
            <person name="Koonin E."/>
            <person name="Slatko B."/>
        </authorList>
    </citation>
    <scope>NUCLEOTIDE SEQUENCE [LARGE SCALE GENOMIC DNA]</scope>
    <source>
        <strain>TRS</strain>
    </source>
</reference>
<comment type="function">
    <text evidence="1">Part of the twin-arginine translocation (Tat) system that transports large folded proteins containing a characteristic twin-arginine motif in their signal peptide across membranes. TatA could form the protein-conducting channel of the Tat system.</text>
</comment>
<comment type="subunit">
    <text evidence="1">The Tat system comprises two distinct complexes: a TatABC complex, containing multiple copies of TatA, TatB and TatC subunits, and a separate TatA complex, containing only TatA subunits. Substrates initially bind to the TatABC complex, which probably triggers association of the separate TatA complex to form the active translocon.</text>
</comment>
<comment type="subcellular location">
    <subcellularLocation>
        <location evidence="1">Cell membrane</location>
        <topology evidence="1">Single-pass membrane protein</topology>
    </subcellularLocation>
</comment>
<comment type="similarity">
    <text evidence="1">Belongs to the TatA/E family.</text>
</comment>